<gene>
    <name type="primary">ERVK-6</name>
    <name type="synonym">ERVK6</name>
</gene>
<accession>Q69383</accession>
<dbReference type="EMBL" id="X82271">
    <property type="protein sequence ID" value="CAA57722.1"/>
    <property type="molecule type" value="mRNA"/>
</dbReference>
<dbReference type="EMBL" id="X82272">
    <property type="status" value="NOT_ANNOTATED_CDS"/>
    <property type="molecule type" value="mRNA"/>
</dbReference>
<dbReference type="EMBL" id="AF164614">
    <property type="status" value="NOT_ANNOTATED_CDS"/>
    <property type="molecule type" value="Genomic_DNA"/>
</dbReference>
<dbReference type="EMBL" id="AF074086">
    <property type="status" value="NOT_ANNOTATED_CDS"/>
    <property type="molecule type" value="Genomic_DNA"/>
</dbReference>
<dbReference type="EMBL" id="Y17832">
    <property type="status" value="NOT_ANNOTATED_CDS"/>
    <property type="molecule type" value="Genomic_DNA"/>
</dbReference>
<dbReference type="EMBL" id="Y17834">
    <property type="status" value="NOT_ANNOTATED_CDS"/>
    <property type="molecule type" value="Genomic_DNA"/>
</dbReference>
<dbReference type="EMBL" id="AF490464">
    <property type="status" value="NOT_ANNOTATED_CDS"/>
    <property type="molecule type" value="Genomic_DNA"/>
</dbReference>
<dbReference type="SMR" id="Q69383"/>
<dbReference type="BioMuta" id="HGNC:13915"/>
<dbReference type="MassIVE" id="Q69383"/>
<dbReference type="AGR" id="HGNC:13915"/>
<dbReference type="GeneCards" id="ERVK-6"/>
<dbReference type="HGNC" id="HGNC:13915">
    <property type="gene designation" value="ERVK-6"/>
</dbReference>
<dbReference type="MIM" id="605626">
    <property type="type" value="gene"/>
</dbReference>
<dbReference type="neXtProt" id="NX_Q69383"/>
<dbReference type="PhylomeDB" id="Q69383"/>
<dbReference type="Pharos" id="Q69383">
    <property type="development level" value="Tbio"/>
</dbReference>
<dbReference type="Proteomes" id="UP000005640">
    <property type="component" value="Unplaced"/>
</dbReference>
<dbReference type="GO" id="GO:0005737">
    <property type="term" value="C:cytoplasm"/>
    <property type="evidence" value="ECO:0000314"/>
    <property type="project" value="UniProtKB"/>
</dbReference>
<dbReference type="GO" id="GO:0005730">
    <property type="term" value="C:nucleolus"/>
    <property type="evidence" value="ECO:0000314"/>
    <property type="project" value="UniProtKB"/>
</dbReference>
<dbReference type="GO" id="GO:0032991">
    <property type="term" value="C:protein-containing complex"/>
    <property type="evidence" value="ECO:0000314"/>
    <property type="project" value="UniProtKB"/>
</dbReference>
<dbReference type="GO" id="GO:0042803">
    <property type="term" value="F:protein homodimerization activity"/>
    <property type="evidence" value="ECO:0000314"/>
    <property type="project" value="UniProtKB"/>
</dbReference>
<dbReference type="GO" id="GO:0003723">
    <property type="term" value="F:RNA binding"/>
    <property type="evidence" value="ECO:0000314"/>
    <property type="project" value="UniProtKB"/>
</dbReference>
<dbReference type="GO" id="GO:0035613">
    <property type="term" value="F:RNA stem-loop binding"/>
    <property type="evidence" value="ECO:0000314"/>
    <property type="project" value="UniProtKB"/>
</dbReference>
<dbReference type="GO" id="GO:0006406">
    <property type="term" value="P:mRNA export from nucleus"/>
    <property type="evidence" value="ECO:0000314"/>
    <property type="project" value="UniProtKB"/>
</dbReference>
<dbReference type="GO" id="GO:0010628">
    <property type="term" value="P:positive regulation of gene expression"/>
    <property type="evidence" value="ECO:0000314"/>
    <property type="project" value="UniProtKB"/>
</dbReference>
<dbReference type="GO" id="GO:0051260">
    <property type="term" value="P:protein homooligomerization"/>
    <property type="evidence" value="ECO:0000315"/>
    <property type="project" value="UniProtKB"/>
</dbReference>
<dbReference type="Pfam" id="PF15695">
    <property type="entry name" value="HERV-K_REC"/>
    <property type="match status" value="1"/>
</dbReference>
<protein>
    <recommendedName>
        <fullName>Endogenous retrovirus group K member 6 Rec protein</fullName>
    </recommendedName>
    <alternativeName>
        <fullName>Central open reading frame</fullName>
        <shortName>c-orf</shortName>
        <shortName>cORF</shortName>
    </alternativeName>
    <alternativeName>
        <fullName>Endogenous retrovirus K protein 6</fullName>
    </alternativeName>
    <alternativeName>
        <fullName>HERV-K(C7) Rec protein</fullName>
    </alternativeName>
    <alternativeName>
        <fullName>HERV-K(HML-2.HOM) Rec protein</fullName>
    </alternativeName>
    <alternativeName>
        <fullName>HERV-K108 Rec protein</fullName>
    </alternativeName>
    <alternativeName>
        <fullName>HERV-K_7p22.1 provirus Rec protein</fullName>
    </alternativeName>
    <alternativeName>
        <fullName>K-Rev</fullName>
    </alternativeName>
    <alternativeName>
        <fullName>Rev-like protein</fullName>
    </alternativeName>
    <alternativeName>
        <fullName>Rev/Rex homolog</fullName>
    </alternativeName>
</protein>
<name>REC6_HUMAN</name>
<keyword id="KW-0963">Cytoplasm</keyword>
<keyword id="KW-0895">ERV</keyword>
<keyword id="KW-0509">mRNA transport</keyword>
<keyword id="KW-0539">Nucleus</keyword>
<keyword id="KW-1185">Reference proteome</keyword>
<keyword id="KW-0694">RNA-binding</keyword>
<keyword id="KW-0813">Transport</keyword>
<keyword id="KW-0814">Transposable element</keyword>
<comment type="function">
    <text evidence="3 4 7 8 9 10">Retroviral replication requires the nuclear export and translation of unspliced, singly-spliced and multiply-spliced derivatives of the initial genomic transcript. Rec interacts with a highly structured RNA element (RcRE) present in the viral 3'LTR and recruits the cellular nuclear export machinery. This permits export to the cytoplasm of unspliced genomic or incompletely spliced subgenomic viral transcripts.</text>
</comment>
<comment type="subunit">
    <text>Forms homodimers, homotrimers, and homotetramers via a C-terminal domain. Associates with XPO1 and with ZNF145.</text>
</comment>
<comment type="subcellular location">
    <subcellularLocation>
        <location>Cytoplasm</location>
    </subcellularLocation>
    <subcellularLocation>
        <location>Nucleus</location>
        <location>Nucleolus</location>
    </subcellularLocation>
    <text>Shuttles between the nucleus and the cytoplasm. When in the nucleus, resides in the nucleolus.</text>
</comment>
<comment type="tissue specificity">
    <text evidence="11">Expressed at higher level in placenta, expressed at lower level in several organs and cell lines.</text>
</comment>
<comment type="miscellaneous">
    <text>Despite functional similarity, Rec shares almost no sequence homology with HIV-1 Rev and HTLV-1 Rex.</text>
</comment>
<comment type="miscellaneous">
    <text>Two proviruses inserted as tandem repeats in most of individuals tested. Both proviral genomes encode identical Rec proteins.</text>
</comment>
<comment type="miscellaneous">
    <text>This Rec protein is encoded by a human specific provirus.</text>
</comment>
<comment type="miscellaneous">
    <text>Has a type 2 genome. The HERV-K(HML-2) family contains type 1 and type 2 genomes depending on the absence or presence of 292 nucleotides at the 5'-end of the env gene. Rec proteins are translated from a doubly spliced transcript expressed exclusively by HERV-K(HML-2) type 2 proviral genomes. The first exon comprises the 87 N-terminal amino acids of the HERV-K(HML-2) type 2 envelope protein. The second exon (18 amino acids) is positioned in the 3' part of the proviral genome.</text>
</comment>
<sequence length="105" mass="11828">MNPSEMQRKAPPRRRRHRNRAPLTHKMNKMVTSEEQMKLPSTKKAEPPTWAQLKKLTQLATKYLENTKVTQTPESMLLAALMIVSMVSAGVPNSSEETATIENGP</sequence>
<evidence type="ECO:0000255" key="1"/>
<evidence type="ECO:0000256" key="2">
    <source>
        <dbReference type="SAM" id="MobiDB-lite"/>
    </source>
</evidence>
<evidence type="ECO:0000269" key="3">
    <source>
    </source>
</evidence>
<evidence type="ECO:0000269" key="4">
    <source>
    </source>
</evidence>
<evidence type="ECO:0000269" key="5">
    <source>
    </source>
</evidence>
<evidence type="ECO:0000269" key="6">
    <source>
    </source>
</evidence>
<evidence type="ECO:0000269" key="7">
    <source>
    </source>
</evidence>
<evidence type="ECO:0000269" key="8">
    <source>
    </source>
</evidence>
<evidence type="ECO:0000269" key="9">
    <source>
    </source>
</evidence>
<evidence type="ECO:0000269" key="10">
    <source>
    </source>
</evidence>
<evidence type="ECO:0000269" key="11">
    <source>
    </source>
</evidence>
<reference key="1">
    <citation type="journal article" date="1995" name="J. Virol.">
        <title>Identification of a Rev-related protein by analysis of spliced transcripts of the human endogenous retroviruses HTDV/HERV-K.</title>
        <authorList>
            <person name="Loewer R."/>
            <person name="Toenjes R.R."/>
            <person name="Korbmacher C."/>
            <person name="Kurth R."/>
            <person name="Loewer J."/>
        </authorList>
    </citation>
    <scope>NUCLEOTIDE SEQUENCE [MRNA]</scope>
    <scope>CHARACTERIZATION</scope>
</reference>
<reference key="2">
    <citation type="journal article" date="1999" name="Curr. Biol.">
        <title>Many human endogenous retrovirus K (HERV-K) proviruses are unique to humans.</title>
        <authorList>
            <person name="Barbulescu M."/>
            <person name="Turner G."/>
            <person name="Seaman M.I."/>
            <person name="Deinard A.S."/>
            <person name="Kidd K.K."/>
            <person name="Lenz J."/>
        </authorList>
    </citation>
    <scope>NUCLEOTIDE SEQUENCE [GENOMIC DNA]</scope>
</reference>
<reference key="3">
    <citation type="journal article" date="1999" name="Nat. Genet.">
        <title>An almost-intact human endogenous retrovirus K on human chromosome 7.</title>
        <authorList>
            <person name="Mayer J."/>
            <person name="Sauter M."/>
            <person name="Racz A."/>
            <person name="Scherer D."/>
            <person name="Mueller-Lantzsch N."/>
            <person name="Meese E.U."/>
        </authorList>
    </citation>
    <scope>NUCLEOTIDE SEQUENCE [GENOMIC DNA]</scope>
</reference>
<reference key="4">
    <citation type="journal article" date="2001" name="Genomics">
        <title>Genomic organization of the human endogenous retrovirus HERV-K(HML-2.HOM) (ERVK6) on chromosome 7.</title>
        <authorList>
            <person name="Reus K."/>
            <person name="Mayer J."/>
            <person name="Sauter M."/>
            <person name="Scherer D."/>
            <person name="Mueller-Lantzsch N."/>
            <person name="Meese E.U."/>
        </authorList>
    </citation>
    <scope>NUCLEOTIDE SEQUENCE [GENOMIC DNA]</scope>
</reference>
<reference key="5">
    <citation type="journal article" date="1999" name="J. Virol.">
        <title>Genome wide screening, cloning, chromosomal assignment and expression of full-length human endogenous retrovirus type K (HERV-K).</title>
        <authorList>
            <person name="Toenjes R.R."/>
            <person name="Czauderna F."/>
            <person name="Kurth R."/>
        </authorList>
    </citation>
    <scope>NUCLEOTIDE SEQUENCE [GENOMIC DNA]</scope>
</reference>
<reference key="6">
    <citation type="journal article" date="1997" name="J. Virol.">
        <title>Expression of human endogenous retrovirus type K envelope glycoprotein in insect and mammalian cells.</title>
        <authorList>
            <person name="Toenjes R.R."/>
            <person name="Limbach C."/>
            <person name="Loewer R."/>
            <person name="Kurth R."/>
        </authorList>
    </citation>
    <scope>CHARACTERIZATION</scope>
</reference>
<reference key="7">
    <citation type="journal article" date="2004" name="Virology">
        <title>Human endogenous retrovirus HERV-K(HML-2) proviruses with Rec protein coding capacity and transcriptional activity.</title>
        <authorList>
            <person name="Mayer J."/>
            <person name="Ehlhardt S."/>
            <person name="Seifert M."/>
            <person name="Sauter M."/>
            <person name="Mueller-Lantzsch N."/>
            <person name="Mehraein Y."/>
            <person name="Zang K.-D."/>
            <person name="Meese E.U."/>
        </authorList>
    </citation>
    <scope>DIVERSITY</scope>
    <scope>EXPRESSION</scope>
</reference>
<reference key="8">
    <citation type="journal article" date="1999" name="J. Virol.">
        <title>cORF and RcRE, the Rev/Rex and RRE/RxRE homologues of the human endogenous retrovirus family HTDV/HERV-K.</title>
        <authorList>
            <person name="Magin C."/>
            <person name="Loewer R."/>
            <person name="Loewer J."/>
        </authorList>
    </citation>
    <scope>FUNCTION</scope>
</reference>
<reference key="9">
    <citation type="journal article" date="1999" name="Proc. Natl. Acad. Sci. U.S.A.">
        <title>An ancient family of human endogenous retroviruses encodes a functional homolog of the HIV-1 Rev protein.</title>
        <authorList>
            <person name="Yang J."/>
            <person name="Bogerd H.P."/>
            <person name="Peng S."/>
            <person name="Wiegand H.L."/>
            <person name="Truant R."/>
            <person name="Cullen B.R."/>
        </authorList>
    </citation>
    <scope>FUNCTION</scope>
    <scope>INTERACTION WITH XPO1</scope>
    <scope>RNA-BINDING</scope>
</reference>
<reference key="10">
    <citation type="journal article" date="2000" name="FEBS Lett.">
        <title>A rev-like NES mediates cytoplasmic localization of HERV-K cORF.</title>
        <authorList>
            <person name="Boese A."/>
            <person name="Sauter M."/>
            <person name="Mueller-Lantzsch N."/>
        </authorList>
    </citation>
    <scope>NUCLEAR EXPORT SIGNAL</scope>
    <scope>MUTAGENESIS OF LEU-53; LEU-56 AND LEU-59</scope>
</reference>
<reference key="11">
    <citation type="journal article" date="2000" name="Virology">
        <title>Corf, the Rev/Rex homologue of HTDV/HERV-K, encodes an arginine-rich nuclear localization signal that exerts a trans-dominant phenotype when mutated.</title>
        <authorList>
            <person name="Magin C."/>
            <person name="Hesse J."/>
            <person name="Loewer J."/>
            <person name="Loewer R."/>
        </authorList>
    </citation>
    <scope>NUCLEAR LOCALIZATION SIGNAL</scope>
    <scope>MUTAGENESIS OF ARG-13; ARG-14; ARG-16; ARG-18 AND ARG-20</scope>
</reference>
<reference key="12">
    <citation type="journal article" date="2000" name="J. Virol.">
        <title>Mutational definition of functional domains within the Rev homolog encoded by human endogenous retrovirus K.</title>
        <authorList>
            <person name="Bogerd H.P."/>
            <person name="Wiegand H.L."/>
            <person name="Yang J."/>
            <person name="Cullen B.R."/>
        </authorList>
    </citation>
    <scope>FUNCTION</scope>
    <scope>MUTAGENESIS</scope>
</reference>
<reference key="13">
    <citation type="journal article" date="2000" name="Oncogene">
        <title>Human endogenous retrovirus protein cORF supports cell transformation and associates with the promyelocytic leukemia zinc finger protein.</title>
        <authorList>
            <person name="Boese A."/>
            <person name="Sauter M."/>
            <person name="Galli U."/>
            <person name="Best B."/>
            <person name="Herbst H."/>
            <person name="Mayer J."/>
            <person name="Kremmer E."/>
            <person name="Roemer K."/>
            <person name="Mueller-Lantzsch N."/>
        </authorList>
    </citation>
    <scope>FUNCTION</scope>
    <scope>INTERACTION WITH ZNF145</scope>
    <scope>TRANSFORMING POTENTIAL</scope>
</reference>
<reference key="14">
    <citation type="journal article" date="2001" name="FEBS Lett.">
        <title>The Rev/Rex homolog HERV-K cORF multimerizes via a C-terminal domain.</title>
        <authorList>
            <person name="Boese A."/>
            <person name="Galli U."/>
            <person name="Geyer M."/>
            <person name="Sauter M."/>
            <person name="Mueller-Lantzsch N."/>
        </authorList>
    </citation>
    <scope>HOMOOLIGOMERIZATION</scope>
</reference>
<reference key="15">
    <citation type="journal article" date="2000" name="RNA">
        <title>The human endogenous retrovirus K Rev response element coincides with a predicted RNA folding region.</title>
        <authorList>
            <person name="Yang J."/>
            <person name="Bogerd H.P."/>
            <person name="Le S.-Y."/>
            <person name="Cullen B.R."/>
        </authorList>
    </citation>
    <scope>FUNCTION</scope>
    <scope>RNA-BINDING</scope>
</reference>
<reference key="16">
    <citation type="journal article" date="2001" name="J. Virol.">
        <title>Rec (formerly Corf) function requires interaction with a complex, folded RNA structure within its responsive element rather than binding to a discrete specific binding site.</title>
        <authorList>
            <person name="Magin-Lachmann C."/>
            <person name="Hahn S."/>
            <person name="Strobel H."/>
            <person name="Held U."/>
            <person name="Loewer J."/>
            <person name="Loewer R."/>
        </authorList>
    </citation>
    <scope>FUNCTION</scope>
    <scope>RNA-BINDING</scope>
</reference>
<reference key="17">
    <citation type="journal article" date="2002" name="Virology">
        <title>Developmental expression of HERV-R (ERV3) and HERV-K in human tissue.</title>
        <authorList>
            <person name="Andersson A.-C."/>
            <person name="Venables P.J.W."/>
            <person name="Toenjes R.R."/>
            <person name="Scherer J."/>
            <person name="Eriksson L."/>
            <person name="Larsson E."/>
        </authorList>
    </citation>
    <scope>TISSUE SPECIFICITY</scope>
</reference>
<feature type="chain" id="PRO_0000186775" description="Endogenous retrovirus group K member 6 Rec protein">
    <location>
        <begin position="1"/>
        <end position="105"/>
    </location>
</feature>
<feature type="region of interest" description="Disordered" evidence="2">
    <location>
        <begin position="1"/>
        <end position="49"/>
    </location>
</feature>
<feature type="short sequence motif" description="Nuclear localization signal" evidence="1">
    <location>
        <begin position="13"/>
        <end position="20"/>
    </location>
</feature>
<feature type="short sequence motif" description="Nuclear export signal" evidence="1">
    <location>
        <begin position="50"/>
        <end position="59"/>
    </location>
</feature>
<feature type="compositionally biased region" description="Basic residues" evidence="2">
    <location>
        <begin position="10"/>
        <end position="20"/>
    </location>
</feature>
<feature type="mutagenesis site" description="No loss of function." evidence="8">
    <original>SEM</original>
    <variation>AAA</variation>
    <location>
        <begin position="4"/>
        <end position="6"/>
    </location>
</feature>
<feature type="mutagenesis site" description="Total loss of function and dominant negative effect." evidence="8">
    <original>RRR</original>
    <variation>AAA</variation>
    <location>
        <begin position="13"/>
        <end position="15"/>
    </location>
</feature>
<feature type="mutagenesis site" description="Total loss of function and dominant negative effect; when associated with A-14; A-16; A-18 and A-20." evidence="6">
    <original>R</original>
    <variation>A</variation>
    <location>
        <position position="13"/>
    </location>
</feature>
<feature type="mutagenesis site" description="Total loss of function and dominant negative effect; when associated with A-13; A-16; A-18 and A-20." evidence="6">
    <original>R</original>
    <variation>A</variation>
    <location>
        <position position="14"/>
    </location>
</feature>
<feature type="mutagenesis site" description="Total loss of function and dominant negative effect; when associated with A-13; A-14; A-18 and A-20." evidence="6">
    <original>R</original>
    <variation>A</variation>
    <location>
        <position position="16"/>
    </location>
</feature>
<feature type="mutagenesis site" description="Total loss of function and dominant negative effect; when associated with A-13; A-14; A-16 and A-20." evidence="6">
    <original>R</original>
    <variation>A</variation>
    <location>
        <position position="18"/>
    </location>
</feature>
<feature type="mutagenesis site" description="No loss of function." evidence="8">
    <original>NR</original>
    <variation>AA</variation>
    <location>
        <begin position="19"/>
        <end position="20"/>
    </location>
</feature>
<feature type="mutagenesis site" description="Total loss of function and dominant negative effect; when associated with A-13; A-14; A-16 and A-18." evidence="6">
    <original>R</original>
    <variation>A</variation>
    <location>
        <position position="20"/>
    </location>
</feature>
<feature type="mutagenesis site" description="Total loss of function and dominant negative effect." evidence="8">
    <original>MVT</original>
    <variation>AAA</variation>
    <location>
        <begin position="30"/>
        <end position="32"/>
    </location>
</feature>
<feature type="mutagenesis site" description="Total loss of function and dominant negative effect." evidence="8">
    <original>MKL</original>
    <variation>AAA</variation>
    <location>
        <begin position="37"/>
        <end position="39"/>
    </location>
</feature>
<feature type="mutagenesis site" description="Total loss of function and dominant negative effect." evidence="8">
    <original>TKK</original>
    <variation>AAA</variation>
    <location>
        <begin position="42"/>
        <end position="44"/>
    </location>
</feature>
<feature type="mutagenesis site" description="Total loss of function and dominant negative effect." evidence="8">
    <original>PTW</original>
    <variation>AAA</variation>
    <location>
        <begin position="48"/>
        <end position="50"/>
    </location>
</feature>
<feature type="mutagenesis site" description="Total loss of function and dominant negative effect." evidence="8">
    <original>LKK</original>
    <variation>AAA</variation>
    <location>
        <begin position="53"/>
        <end position="55"/>
    </location>
</feature>
<feature type="mutagenesis site" description="Exclusive nuclear localization; when associated with A-56 and A-59." evidence="5">
    <original>L</original>
    <variation>A</variation>
    <location>
        <position position="53"/>
    </location>
</feature>
<feature type="mutagenesis site" description="Exclusive nuclear localization; when associated with A-53 and A-59." evidence="5">
    <original>L</original>
    <variation>A</variation>
    <location>
        <position position="56"/>
    </location>
</feature>
<feature type="mutagenesis site" description="Partial loss of function." evidence="8">
    <original>LAT</original>
    <variation>AAA</variation>
    <location>
        <begin position="59"/>
        <end position="61"/>
    </location>
</feature>
<feature type="mutagenesis site" description="Exclusive nuclear localization; when associated with A-53 and A-56." evidence="5">
    <original>L</original>
    <variation>A</variation>
    <location>
        <position position="59"/>
    </location>
</feature>
<feature type="mutagenesis site" description="Total loss of function and dominant negative effect." evidence="8">
    <original>NTK</original>
    <variation>AAA</variation>
    <location>
        <begin position="66"/>
        <end position="68"/>
    </location>
</feature>
<feature type="mutagenesis site" description="Total loss of function and dominant negative effect." evidence="8">
    <original>MLL</original>
    <variation>AAA</variation>
    <location>
        <begin position="76"/>
        <end position="78"/>
    </location>
</feature>
<feature type="mutagenesis site" description="Total loss of function and dominant negative effect." evidence="8">
    <original>MIV</original>
    <variation>AAA</variation>
    <location>
        <begin position="82"/>
        <end position="84"/>
    </location>
</feature>
<feature type="mutagenesis site" description="Partial loss of function." evidence="8">
    <original>MVS</original>
    <variation>AAA</variation>
    <location>
        <begin position="86"/>
        <end position="88"/>
    </location>
</feature>
<feature type="mutagenesis site" description="No loss of function." evidence="8">
    <original>NSS</original>
    <variation>AAA</variation>
    <location>
        <begin position="93"/>
        <end position="95"/>
    </location>
</feature>
<proteinExistence type="evidence at protein level"/>
<organism>
    <name type="scientific">Homo sapiens</name>
    <name type="common">Human</name>
    <dbReference type="NCBI Taxonomy" id="9606"/>
    <lineage>
        <taxon>Eukaryota</taxon>
        <taxon>Metazoa</taxon>
        <taxon>Chordata</taxon>
        <taxon>Craniata</taxon>
        <taxon>Vertebrata</taxon>
        <taxon>Euteleostomi</taxon>
        <taxon>Mammalia</taxon>
        <taxon>Eutheria</taxon>
        <taxon>Euarchontoglires</taxon>
        <taxon>Primates</taxon>
        <taxon>Haplorrhini</taxon>
        <taxon>Catarrhini</taxon>
        <taxon>Hominidae</taxon>
        <taxon>Homo</taxon>
    </lineage>
</organism>